<feature type="chain" id="PRO_1000083775" description="ATP synthase gamma chain">
    <location>
        <begin position="1"/>
        <end position="292"/>
    </location>
</feature>
<sequence length="292" mass="31813">MPSLKDLRNRIASVKATQKITKAMQMVAAAKLRRAQEAAEAARPYSQRMGAVLANIAQNVSGEDAPALMVGTGKDDVHLLVVCTAERGLCGGFNSQIARLARDHARKLLAEGKTVKIITVGKKGADILRREFSALLHDHVDLREVKQLAFVHADQIGHKIIKLFEEGAFDVCTLFYSEFKSVISQVPTAQQLIPASADNEAEMETAGDAIYEYEPDPAAILSTLIPRNISVQIFRALLENVAGEMGAKMSAMDNATRNAGDMINKLSITYNRQRQAQITKELIEIISGAEAL</sequence>
<keyword id="KW-0066">ATP synthesis</keyword>
<keyword id="KW-0997">Cell inner membrane</keyword>
<keyword id="KW-1003">Cell membrane</keyword>
<keyword id="KW-0139">CF(1)</keyword>
<keyword id="KW-0375">Hydrogen ion transport</keyword>
<keyword id="KW-0406">Ion transport</keyword>
<keyword id="KW-0472">Membrane</keyword>
<keyword id="KW-0813">Transport</keyword>
<reference key="1">
    <citation type="submission" date="2007-12" db="EMBL/GenBank/DDBJ databases">
        <title>Brucella suis ATCC 23445 whole genome shotgun sequencing project.</title>
        <authorList>
            <person name="Setubal J.C."/>
            <person name="Bowns C."/>
            <person name="Boyle S."/>
            <person name="Crasta O.R."/>
            <person name="Czar M.J."/>
            <person name="Dharmanolla C."/>
            <person name="Gillespie J.J."/>
            <person name="Kenyon R.W."/>
            <person name="Lu J."/>
            <person name="Mane S."/>
            <person name="Mohapatra S."/>
            <person name="Nagrani S."/>
            <person name="Purkayastha A."/>
            <person name="Rajasimha H.K."/>
            <person name="Shallom J.M."/>
            <person name="Shallom S."/>
            <person name="Shukla M."/>
            <person name="Snyder E.E."/>
            <person name="Sobral B.W."/>
            <person name="Wattam A.R."/>
            <person name="Will R."/>
            <person name="Williams K."/>
            <person name="Yoo H."/>
            <person name="Bruce D."/>
            <person name="Detter C."/>
            <person name="Munk C."/>
            <person name="Brettin T.S."/>
        </authorList>
    </citation>
    <scope>NUCLEOTIDE SEQUENCE [LARGE SCALE GENOMIC DNA]</scope>
    <source>
        <strain>ATCC 23445 / NCTC 10510</strain>
    </source>
</reference>
<dbReference type="EMBL" id="CP000912">
    <property type="protein sequence ID" value="ABY40209.1"/>
    <property type="molecule type" value="Genomic_DNA"/>
</dbReference>
<dbReference type="RefSeq" id="WP_004689233.1">
    <property type="nucleotide sequence ID" value="NC_010167.1"/>
</dbReference>
<dbReference type="SMR" id="A9WWS3"/>
<dbReference type="KEGG" id="bmt:BSUIS_B1276"/>
<dbReference type="HOGENOM" id="CLU_050669_0_1_5"/>
<dbReference type="Proteomes" id="UP000008545">
    <property type="component" value="Chromosome II"/>
</dbReference>
<dbReference type="GO" id="GO:0005886">
    <property type="term" value="C:plasma membrane"/>
    <property type="evidence" value="ECO:0007669"/>
    <property type="project" value="UniProtKB-SubCell"/>
</dbReference>
<dbReference type="GO" id="GO:0045259">
    <property type="term" value="C:proton-transporting ATP synthase complex"/>
    <property type="evidence" value="ECO:0007669"/>
    <property type="project" value="UniProtKB-KW"/>
</dbReference>
<dbReference type="GO" id="GO:0005524">
    <property type="term" value="F:ATP binding"/>
    <property type="evidence" value="ECO:0007669"/>
    <property type="project" value="UniProtKB-UniRule"/>
</dbReference>
<dbReference type="GO" id="GO:0046933">
    <property type="term" value="F:proton-transporting ATP synthase activity, rotational mechanism"/>
    <property type="evidence" value="ECO:0007669"/>
    <property type="project" value="UniProtKB-UniRule"/>
</dbReference>
<dbReference type="GO" id="GO:0042777">
    <property type="term" value="P:proton motive force-driven plasma membrane ATP synthesis"/>
    <property type="evidence" value="ECO:0007669"/>
    <property type="project" value="UniProtKB-UniRule"/>
</dbReference>
<dbReference type="CDD" id="cd12151">
    <property type="entry name" value="F1-ATPase_gamma"/>
    <property type="match status" value="1"/>
</dbReference>
<dbReference type="FunFam" id="1.10.287.80:FF:000001">
    <property type="entry name" value="ATP synthase gamma chain"/>
    <property type="match status" value="1"/>
</dbReference>
<dbReference type="FunFam" id="1.10.287.80:FF:000003">
    <property type="entry name" value="ATP synthase gamma chain, chloroplastic"/>
    <property type="match status" value="1"/>
</dbReference>
<dbReference type="Gene3D" id="3.40.1380.10">
    <property type="match status" value="1"/>
</dbReference>
<dbReference type="Gene3D" id="1.10.287.80">
    <property type="entry name" value="ATP synthase, gamma subunit, helix hairpin domain"/>
    <property type="match status" value="1"/>
</dbReference>
<dbReference type="HAMAP" id="MF_00815">
    <property type="entry name" value="ATP_synth_gamma_bact"/>
    <property type="match status" value="1"/>
</dbReference>
<dbReference type="InterPro" id="IPR035968">
    <property type="entry name" value="ATP_synth_F1_ATPase_gsu"/>
</dbReference>
<dbReference type="InterPro" id="IPR000131">
    <property type="entry name" value="ATP_synth_F1_gsu"/>
</dbReference>
<dbReference type="InterPro" id="IPR023632">
    <property type="entry name" value="ATP_synth_F1_gsu_CS"/>
</dbReference>
<dbReference type="NCBIfam" id="TIGR01146">
    <property type="entry name" value="ATPsyn_F1gamma"/>
    <property type="match status" value="1"/>
</dbReference>
<dbReference type="NCBIfam" id="NF004146">
    <property type="entry name" value="PRK05621.1-4"/>
    <property type="match status" value="1"/>
</dbReference>
<dbReference type="PANTHER" id="PTHR11693">
    <property type="entry name" value="ATP SYNTHASE GAMMA CHAIN"/>
    <property type="match status" value="1"/>
</dbReference>
<dbReference type="PANTHER" id="PTHR11693:SF22">
    <property type="entry name" value="ATP SYNTHASE SUBUNIT GAMMA, MITOCHONDRIAL"/>
    <property type="match status" value="1"/>
</dbReference>
<dbReference type="Pfam" id="PF00231">
    <property type="entry name" value="ATP-synt"/>
    <property type="match status" value="1"/>
</dbReference>
<dbReference type="PIRSF" id="PIRSF039089">
    <property type="entry name" value="ATP_synthase_gamma"/>
    <property type="match status" value="1"/>
</dbReference>
<dbReference type="PRINTS" id="PR00126">
    <property type="entry name" value="ATPASEGAMMA"/>
</dbReference>
<dbReference type="SUPFAM" id="SSF52943">
    <property type="entry name" value="ATP synthase (F1-ATPase), gamma subunit"/>
    <property type="match status" value="1"/>
</dbReference>
<dbReference type="PROSITE" id="PS00153">
    <property type="entry name" value="ATPASE_GAMMA"/>
    <property type="match status" value="1"/>
</dbReference>
<comment type="function">
    <text evidence="1">Produces ATP from ADP in the presence of a proton gradient across the membrane. The gamma chain is believed to be important in regulating ATPase activity and the flow of protons through the CF(0) complex.</text>
</comment>
<comment type="subunit">
    <text evidence="1">F-type ATPases have 2 components, CF(1) - the catalytic core - and CF(0) - the membrane proton channel. CF(1) has five subunits: alpha(3), beta(3), gamma(1), delta(1), epsilon(1). CF(0) has three main subunits: a, b and c.</text>
</comment>
<comment type="subcellular location">
    <subcellularLocation>
        <location evidence="1">Cell inner membrane</location>
        <topology evidence="1">Peripheral membrane protein</topology>
    </subcellularLocation>
</comment>
<comment type="similarity">
    <text evidence="1">Belongs to the ATPase gamma chain family.</text>
</comment>
<proteinExistence type="inferred from homology"/>
<accession>A9WWS3</accession>
<evidence type="ECO:0000255" key="1">
    <source>
        <dbReference type="HAMAP-Rule" id="MF_00815"/>
    </source>
</evidence>
<protein>
    <recommendedName>
        <fullName evidence="1">ATP synthase gamma chain</fullName>
    </recommendedName>
    <alternativeName>
        <fullName evidence="1">ATP synthase F1 sector gamma subunit</fullName>
    </alternativeName>
    <alternativeName>
        <fullName evidence="1">F-ATPase gamma subunit</fullName>
    </alternativeName>
</protein>
<gene>
    <name evidence="1" type="primary">atpG</name>
    <name type="ordered locus">BSUIS_B1276</name>
</gene>
<name>ATPG_BRUSI</name>
<organism>
    <name type="scientific">Brucella suis (strain ATCC 23445 / NCTC 10510)</name>
    <dbReference type="NCBI Taxonomy" id="470137"/>
    <lineage>
        <taxon>Bacteria</taxon>
        <taxon>Pseudomonadati</taxon>
        <taxon>Pseudomonadota</taxon>
        <taxon>Alphaproteobacteria</taxon>
        <taxon>Hyphomicrobiales</taxon>
        <taxon>Brucellaceae</taxon>
        <taxon>Brucella/Ochrobactrum group</taxon>
        <taxon>Brucella</taxon>
    </lineage>
</organism>